<protein>
    <recommendedName>
        <fullName evidence="1">Ribose-5-phosphate isomerase A</fullName>
        <ecNumber evidence="1">5.3.1.6</ecNumber>
    </recommendedName>
    <alternativeName>
        <fullName evidence="1">Phosphoriboisomerase A</fullName>
        <shortName evidence="1">PRI</shortName>
    </alternativeName>
</protein>
<reference key="1">
    <citation type="submission" date="2006-08" db="EMBL/GenBank/DDBJ databases">
        <title>Complete sequence of Shewanella sp. MR-4.</title>
        <authorList>
            <consortium name="US DOE Joint Genome Institute"/>
            <person name="Copeland A."/>
            <person name="Lucas S."/>
            <person name="Lapidus A."/>
            <person name="Barry K."/>
            <person name="Detter J.C."/>
            <person name="Glavina del Rio T."/>
            <person name="Hammon N."/>
            <person name="Israni S."/>
            <person name="Dalin E."/>
            <person name="Tice H."/>
            <person name="Pitluck S."/>
            <person name="Kiss H."/>
            <person name="Brettin T."/>
            <person name="Bruce D."/>
            <person name="Han C."/>
            <person name="Tapia R."/>
            <person name="Gilna P."/>
            <person name="Schmutz J."/>
            <person name="Larimer F."/>
            <person name="Land M."/>
            <person name="Hauser L."/>
            <person name="Kyrpides N."/>
            <person name="Mikhailova N."/>
            <person name="Nealson K."/>
            <person name="Konstantinidis K."/>
            <person name="Klappenbach J."/>
            <person name="Tiedje J."/>
            <person name="Richardson P."/>
        </authorList>
    </citation>
    <scope>NUCLEOTIDE SEQUENCE [LARGE SCALE GENOMIC DNA]</scope>
    <source>
        <strain>MR-4</strain>
    </source>
</reference>
<gene>
    <name evidence="1" type="primary">rpiA</name>
    <name type="ordered locus">Shewmr4_0974</name>
</gene>
<dbReference type="EC" id="5.3.1.6" evidence="1"/>
<dbReference type="EMBL" id="CP000446">
    <property type="protein sequence ID" value="ABI38054.1"/>
    <property type="molecule type" value="Genomic_DNA"/>
</dbReference>
<dbReference type="RefSeq" id="WP_011621766.1">
    <property type="nucleotide sequence ID" value="NC_008321.1"/>
</dbReference>
<dbReference type="SMR" id="Q0HLL3"/>
<dbReference type="GeneID" id="94726959"/>
<dbReference type="KEGG" id="she:Shewmr4_0974"/>
<dbReference type="HOGENOM" id="CLU_056590_1_1_6"/>
<dbReference type="UniPathway" id="UPA00115">
    <property type="reaction ID" value="UER00412"/>
</dbReference>
<dbReference type="GO" id="GO:0005829">
    <property type="term" value="C:cytosol"/>
    <property type="evidence" value="ECO:0007669"/>
    <property type="project" value="TreeGrafter"/>
</dbReference>
<dbReference type="GO" id="GO:0004751">
    <property type="term" value="F:ribose-5-phosphate isomerase activity"/>
    <property type="evidence" value="ECO:0007669"/>
    <property type="project" value="UniProtKB-UniRule"/>
</dbReference>
<dbReference type="GO" id="GO:0006014">
    <property type="term" value="P:D-ribose metabolic process"/>
    <property type="evidence" value="ECO:0007669"/>
    <property type="project" value="TreeGrafter"/>
</dbReference>
<dbReference type="GO" id="GO:0009052">
    <property type="term" value="P:pentose-phosphate shunt, non-oxidative branch"/>
    <property type="evidence" value="ECO:0007669"/>
    <property type="project" value="UniProtKB-UniRule"/>
</dbReference>
<dbReference type="CDD" id="cd01398">
    <property type="entry name" value="RPI_A"/>
    <property type="match status" value="1"/>
</dbReference>
<dbReference type="FunFam" id="3.30.70.260:FF:000004">
    <property type="entry name" value="Ribose-5-phosphate isomerase A"/>
    <property type="match status" value="1"/>
</dbReference>
<dbReference type="FunFam" id="3.40.50.1360:FF:000001">
    <property type="entry name" value="Ribose-5-phosphate isomerase A"/>
    <property type="match status" value="1"/>
</dbReference>
<dbReference type="Gene3D" id="3.30.70.260">
    <property type="match status" value="1"/>
</dbReference>
<dbReference type="Gene3D" id="3.40.50.1360">
    <property type="match status" value="1"/>
</dbReference>
<dbReference type="HAMAP" id="MF_00170">
    <property type="entry name" value="Rib_5P_isom_A"/>
    <property type="match status" value="1"/>
</dbReference>
<dbReference type="InterPro" id="IPR037171">
    <property type="entry name" value="NagB/RpiA_transferase-like"/>
</dbReference>
<dbReference type="InterPro" id="IPR020672">
    <property type="entry name" value="Ribose5P_isomerase_typA_subgr"/>
</dbReference>
<dbReference type="InterPro" id="IPR004788">
    <property type="entry name" value="Ribose5P_isomerase_type_A"/>
</dbReference>
<dbReference type="NCBIfam" id="NF001924">
    <property type="entry name" value="PRK00702.1"/>
    <property type="match status" value="1"/>
</dbReference>
<dbReference type="NCBIfam" id="TIGR00021">
    <property type="entry name" value="rpiA"/>
    <property type="match status" value="1"/>
</dbReference>
<dbReference type="PANTHER" id="PTHR11934">
    <property type="entry name" value="RIBOSE-5-PHOSPHATE ISOMERASE"/>
    <property type="match status" value="1"/>
</dbReference>
<dbReference type="PANTHER" id="PTHR11934:SF0">
    <property type="entry name" value="RIBOSE-5-PHOSPHATE ISOMERASE"/>
    <property type="match status" value="1"/>
</dbReference>
<dbReference type="Pfam" id="PF06026">
    <property type="entry name" value="Rib_5-P_isom_A"/>
    <property type="match status" value="1"/>
</dbReference>
<dbReference type="SUPFAM" id="SSF75445">
    <property type="entry name" value="D-ribose-5-phosphate isomerase (RpiA), lid domain"/>
    <property type="match status" value="1"/>
</dbReference>
<dbReference type="SUPFAM" id="SSF100950">
    <property type="entry name" value="NagB/RpiA/CoA transferase-like"/>
    <property type="match status" value="1"/>
</dbReference>
<name>RPIA_SHESM</name>
<comment type="function">
    <text evidence="1">Catalyzes the reversible conversion of ribose-5-phosphate to ribulose 5-phosphate.</text>
</comment>
<comment type="catalytic activity">
    <reaction evidence="1">
        <text>aldehydo-D-ribose 5-phosphate = D-ribulose 5-phosphate</text>
        <dbReference type="Rhea" id="RHEA:14657"/>
        <dbReference type="ChEBI" id="CHEBI:58121"/>
        <dbReference type="ChEBI" id="CHEBI:58273"/>
        <dbReference type="EC" id="5.3.1.6"/>
    </reaction>
</comment>
<comment type="pathway">
    <text evidence="1">Carbohydrate degradation; pentose phosphate pathway; D-ribose 5-phosphate from D-ribulose 5-phosphate (non-oxidative stage): step 1/1.</text>
</comment>
<comment type="subunit">
    <text evidence="1">Homodimer.</text>
</comment>
<comment type="similarity">
    <text evidence="1">Belongs to the ribose 5-phosphate isomerase family.</text>
</comment>
<proteinExistence type="inferred from homology"/>
<accession>Q0HLL3</accession>
<keyword id="KW-0413">Isomerase</keyword>
<organism>
    <name type="scientific">Shewanella sp. (strain MR-4)</name>
    <dbReference type="NCBI Taxonomy" id="60480"/>
    <lineage>
        <taxon>Bacteria</taxon>
        <taxon>Pseudomonadati</taxon>
        <taxon>Pseudomonadota</taxon>
        <taxon>Gammaproteobacteria</taxon>
        <taxon>Alteromonadales</taxon>
        <taxon>Shewanellaceae</taxon>
        <taxon>Shewanella</taxon>
    </lineage>
</organism>
<feature type="chain" id="PRO_1000016994" description="Ribose-5-phosphate isomerase A">
    <location>
        <begin position="1"/>
        <end position="219"/>
    </location>
</feature>
<feature type="active site" description="Proton acceptor" evidence="1">
    <location>
        <position position="103"/>
    </location>
</feature>
<feature type="binding site" evidence="1">
    <location>
        <begin position="28"/>
        <end position="31"/>
    </location>
    <ligand>
        <name>substrate</name>
    </ligand>
</feature>
<feature type="binding site" evidence="1">
    <location>
        <begin position="81"/>
        <end position="84"/>
    </location>
    <ligand>
        <name>substrate</name>
    </ligand>
</feature>
<feature type="binding site" evidence="1">
    <location>
        <begin position="94"/>
        <end position="97"/>
    </location>
    <ligand>
        <name>substrate</name>
    </ligand>
</feature>
<feature type="binding site" evidence="1">
    <location>
        <position position="121"/>
    </location>
    <ligand>
        <name>substrate</name>
    </ligand>
</feature>
<sequence length="219" mass="23313">MTQDEMKKAAGWAALKYVEKDSIVGVGTGSTVNHFIDALATMKADIEGAVSSSEASTQKMKALGIPVYDLNSVDKLSVYVDGADEINGHMDMIKGGGAALTREKIVAAVAEKFVCIVDNTKQVDILGEFPLPVEVIPMARSYVARELVKLGGDPVYREGVVTDNGNVILDVYNLKIINPKELEEKINAIVGVVTNGLFAKRGADVLLVGTPEGVKTFTA</sequence>
<evidence type="ECO:0000255" key="1">
    <source>
        <dbReference type="HAMAP-Rule" id="MF_00170"/>
    </source>
</evidence>